<keyword id="KW-0687">Ribonucleoprotein</keyword>
<keyword id="KW-0689">Ribosomal protein</keyword>
<protein>
    <recommendedName>
        <fullName evidence="1">Large ribosomal subunit protein eL21</fullName>
    </recommendedName>
    <alternativeName>
        <fullName evidence="3">50S ribosomal protein L21e</fullName>
    </alternativeName>
</protein>
<name>RL21_METS3</name>
<dbReference type="EMBL" id="CP000678">
    <property type="protein sequence ID" value="ABQ87582.1"/>
    <property type="molecule type" value="Genomic_DNA"/>
</dbReference>
<dbReference type="RefSeq" id="WP_004032531.1">
    <property type="nucleotide sequence ID" value="NZ_CP117965.1"/>
</dbReference>
<dbReference type="SMR" id="A5UN04"/>
<dbReference type="STRING" id="420247.Msm_1377"/>
<dbReference type="EnsemblBacteria" id="ABQ87582">
    <property type="protein sequence ID" value="ABQ87582"/>
    <property type="gene ID" value="Msm_1377"/>
</dbReference>
<dbReference type="KEGG" id="msi:Msm_1377"/>
<dbReference type="PATRIC" id="fig|420247.28.peg.1372"/>
<dbReference type="eggNOG" id="arCOG04129">
    <property type="taxonomic scope" value="Archaea"/>
</dbReference>
<dbReference type="HOGENOM" id="CLU_103610_1_1_2"/>
<dbReference type="Proteomes" id="UP000001992">
    <property type="component" value="Chromosome"/>
</dbReference>
<dbReference type="GO" id="GO:1990904">
    <property type="term" value="C:ribonucleoprotein complex"/>
    <property type="evidence" value="ECO:0007669"/>
    <property type="project" value="UniProtKB-KW"/>
</dbReference>
<dbReference type="GO" id="GO:0005840">
    <property type="term" value="C:ribosome"/>
    <property type="evidence" value="ECO:0007669"/>
    <property type="project" value="UniProtKB-KW"/>
</dbReference>
<dbReference type="GO" id="GO:0003735">
    <property type="term" value="F:structural constituent of ribosome"/>
    <property type="evidence" value="ECO:0007669"/>
    <property type="project" value="InterPro"/>
</dbReference>
<dbReference type="GO" id="GO:0006412">
    <property type="term" value="P:translation"/>
    <property type="evidence" value="ECO:0007669"/>
    <property type="project" value="UniProtKB-UniRule"/>
</dbReference>
<dbReference type="FunFam" id="2.30.30.70:FF:000001">
    <property type="entry name" value="60S ribosomal protein L21"/>
    <property type="match status" value="1"/>
</dbReference>
<dbReference type="Gene3D" id="2.30.30.70">
    <property type="entry name" value="Ribosomal protein L21"/>
    <property type="match status" value="1"/>
</dbReference>
<dbReference type="HAMAP" id="MF_00369">
    <property type="entry name" value="Ribosomal_eL21"/>
    <property type="match status" value="1"/>
</dbReference>
<dbReference type="InterPro" id="IPR001147">
    <property type="entry name" value="Ribosomal_eL21"/>
</dbReference>
<dbReference type="InterPro" id="IPR022856">
    <property type="entry name" value="Ribosomal_eL21_arc"/>
</dbReference>
<dbReference type="InterPro" id="IPR018259">
    <property type="entry name" value="Ribosomal_eL21_CS"/>
</dbReference>
<dbReference type="InterPro" id="IPR036948">
    <property type="entry name" value="Ribosomal_eL21_sf"/>
</dbReference>
<dbReference type="InterPro" id="IPR008991">
    <property type="entry name" value="Translation_prot_SH3-like_sf"/>
</dbReference>
<dbReference type="NCBIfam" id="NF003303">
    <property type="entry name" value="PRK04306.1"/>
    <property type="match status" value="1"/>
</dbReference>
<dbReference type="PANTHER" id="PTHR20981">
    <property type="entry name" value="60S RIBOSOMAL PROTEIN L21"/>
    <property type="match status" value="1"/>
</dbReference>
<dbReference type="Pfam" id="PF01157">
    <property type="entry name" value="Ribosomal_L21e"/>
    <property type="match status" value="1"/>
</dbReference>
<dbReference type="SUPFAM" id="SSF50104">
    <property type="entry name" value="Translation proteins SH3-like domain"/>
    <property type="match status" value="1"/>
</dbReference>
<dbReference type="PROSITE" id="PS01171">
    <property type="entry name" value="RIBOSOMAL_L21E"/>
    <property type="match status" value="1"/>
</dbReference>
<proteinExistence type="inferred from homology"/>
<gene>
    <name evidence="1" type="primary">rpl21e</name>
    <name type="ordered locus">Msm_1377</name>
</gene>
<organism>
    <name type="scientific">Methanobrevibacter smithii (strain ATCC 35061 / DSM 861 / OCM 144 / PS)</name>
    <dbReference type="NCBI Taxonomy" id="420247"/>
    <lineage>
        <taxon>Archaea</taxon>
        <taxon>Methanobacteriati</taxon>
        <taxon>Methanobacteriota</taxon>
        <taxon>Methanomada group</taxon>
        <taxon>Methanobacteria</taxon>
        <taxon>Methanobacteriales</taxon>
        <taxon>Methanobacteriaceae</taxon>
        <taxon>Methanobrevibacter</taxon>
    </lineage>
</organism>
<accession>A5UN04</accession>
<sequence>MQRSRGFRSKSRRKMTKVVREGRSNPITNKLQKFEEGDLVHITINPSIQKGQPHPRFHGKTGKITDKKGKAYIVSLTDGNKAKELIIRPDHLKLQTSQ</sequence>
<feature type="chain" id="PRO_1000007124" description="Large ribosomal subunit protein eL21">
    <location>
        <begin position="1"/>
        <end position="98"/>
    </location>
</feature>
<feature type="region of interest" description="Disordered" evidence="2">
    <location>
        <begin position="1"/>
        <end position="28"/>
    </location>
</feature>
<feature type="compositionally biased region" description="Basic residues" evidence="2">
    <location>
        <begin position="1"/>
        <end position="17"/>
    </location>
</feature>
<evidence type="ECO:0000255" key="1">
    <source>
        <dbReference type="HAMAP-Rule" id="MF_00369"/>
    </source>
</evidence>
<evidence type="ECO:0000256" key="2">
    <source>
        <dbReference type="SAM" id="MobiDB-lite"/>
    </source>
</evidence>
<evidence type="ECO:0000305" key="3"/>
<comment type="similarity">
    <text evidence="1">Belongs to the eukaryotic ribosomal protein eL21 family.</text>
</comment>
<reference key="1">
    <citation type="journal article" date="2007" name="Proc. Natl. Acad. Sci. U.S.A.">
        <title>Genomic and metabolic adaptations of Methanobrevibacter smithii to the human gut.</title>
        <authorList>
            <person name="Samuel B.S."/>
            <person name="Hansen E.E."/>
            <person name="Manchester J.K."/>
            <person name="Coutinho P.M."/>
            <person name="Henrissat B."/>
            <person name="Fulton R."/>
            <person name="Latreille P."/>
            <person name="Kim K."/>
            <person name="Wilson R.K."/>
            <person name="Gordon J.I."/>
        </authorList>
    </citation>
    <scope>NUCLEOTIDE SEQUENCE [LARGE SCALE GENOMIC DNA]</scope>
    <source>
        <strain>ATCC 35061 / DSM 861 / OCM 144 / PS</strain>
    </source>
</reference>